<reference key="1">
    <citation type="journal article" date="2009" name="ISME J.">
        <title>The genome sequence of the psychrophilic archaeon, Methanococcoides burtonii: the role of genome evolution in cold adaptation.</title>
        <authorList>
            <person name="Allen M.A."/>
            <person name="Lauro F.M."/>
            <person name="Williams T.J."/>
            <person name="Burg D."/>
            <person name="Siddiqui K.S."/>
            <person name="De Francisci D."/>
            <person name="Chong K.W."/>
            <person name="Pilak O."/>
            <person name="Chew H.H."/>
            <person name="De Maere M.Z."/>
            <person name="Ting L."/>
            <person name="Katrib M."/>
            <person name="Ng C."/>
            <person name="Sowers K.R."/>
            <person name="Galperin M.Y."/>
            <person name="Anderson I.J."/>
            <person name="Ivanova N."/>
            <person name="Dalin E."/>
            <person name="Martinez M."/>
            <person name="Lapidus A."/>
            <person name="Hauser L."/>
            <person name="Land M."/>
            <person name="Thomas T."/>
            <person name="Cavicchioli R."/>
        </authorList>
    </citation>
    <scope>NUCLEOTIDE SEQUENCE [LARGE SCALE GENOMIC DNA]</scope>
    <source>
        <strain>DSM 6242 / NBRC 107633 / OCM 468 / ACE-M</strain>
    </source>
</reference>
<evidence type="ECO:0000255" key="1">
    <source>
        <dbReference type="HAMAP-Rule" id="MF_00442"/>
    </source>
</evidence>
<gene>
    <name evidence="1" type="primary">hel308</name>
    <name type="ordered locus">Mbur_1102</name>
</gene>
<keyword id="KW-0067">ATP-binding</keyword>
<keyword id="KW-0227">DNA damage</keyword>
<keyword id="KW-0234">DNA repair</keyword>
<keyword id="KW-0238">DNA-binding</keyword>
<keyword id="KW-0347">Helicase</keyword>
<keyword id="KW-0378">Hydrolase</keyword>
<keyword id="KW-0413">Isomerase</keyword>
<keyword id="KW-0547">Nucleotide-binding</keyword>
<sequence>MMIRELDIPRDIIGFYEDSGIKELYPPQAEAIEMGLLEKKNLLAAIPTASGKTLLAELAMIKAIREGGKALYIVPLRALASEKFERFKELAPFGIKVGISTGDLDSRADWLGVNDIIVATSEKTDSLLRNGTSWMDEITTVVVDEIHLLDSKNRGPTLEVTITKLMRLNPDVQVVALSATVGNAREMADWLGAALVLSEWRPTDLHEGVLFGDAINFPGSQKKIDRLEKDDAVNLVLDTIKAEGQCLVFESSRRNCAGFAKTASSKVAKILDNDIMIKLAGIAEEVESTGETDTAIVLANCIRKGVAFHHAGLNSNHRKLVENGFRQNLIKVISSTPTLAAGLNLPARRVIIRSYRRFDSNFGMQPIPVLEYKQMAGRAGRPHLDPYGESVLLAKTYDEFAQLMENYVEADAEDIWSKLGTENALRTHVLSTIVNGFASTRQELFDFFGATFFAYQQDKWMLEEVINDCLEFLIDKAMVSETEDIEDASKLFLRGTRLGSLVSMLYIDPLSGSKIVDGFKDIGKSTGGNMGSLEDDKGDDITVTDMTLLHLVCSTPDMRQLYLRNTDYTIVNEYIVAHSDEFHEIPDKLKETDYEWFMGEVKTAMLLEEWVTEVSAEDITRHFNVGEGDIHALADTSEWLMHAAAKLAELLGVEYSSHAYSLEKRIRYGSGLDLMELVGIRGVGRVRARKLYNAGFVSVAKLKGADISVLSKLVGPKVAYNILSGIGVRVNDKHFNSAPISSNTLDTLLDKNQKTFNDFQ</sequence>
<name>HELS_METBU</name>
<feature type="chain" id="PRO_1000124583" description="ATP-dependent DNA helicase Hel308">
    <location>
        <begin position="1"/>
        <end position="760"/>
    </location>
</feature>
<feature type="domain" description="Helicase ATP-binding" evidence="1">
    <location>
        <begin position="33"/>
        <end position="199"/>
    </location>
</feature>
<feature type="domain" description="Helicase C-terminal" evidence="1">
    <location>
        <begin position="232"/>
        <end position="426"/>
    </location>
</feature>
<feature type="short sequence motif" description="DEAH box" evidence="1">
    <location>
        <begin position="144"/>
        <end position="147"/>
    </location>
</feature>
<feature type="binding site" evidence="1">
    <location>
        <position position="28"/>
    </location>
    <ligand>
        <name>ATP</name>
        <dbReference type="ChEBI" id="CHEBI:30616"/>
    </ligand>
</feature>
<feature type="binding site" evidence="1">
    <location>
        <begin position="46"/>
        <end position="53"/>
    </location>
    <ligand>
        <name>ATP</name>
        <dbReference type="ChEBI" id="CHEBI:30616"/>
    </ligand>
</feature>
<dbReference type="EC" id="5.6.2.4" evidence="1"/>
<dbReference type="EMBL" id="CP000300">
    <property type="protein sequence ID" value="ABE52030.1"/>
    <property type="molecule type" value="Genomic_DNA"/>
</dbReference>
<dbReference type="RefSeq" id="WP_011499178.1">
    <property type="nucleotide sequence ID" value="NC_007955.1"/>
</dbReference>
<dbReference type="SMR" id="Q12WZ6"/>
<dbReference type="STRING" id="259564.Mbur_1102"/>
<dbReference type="GeneID" id="3997709"/>
<dbReference type="KEGG" id="mbu:Mbur_1102"/>
<dbReference type="HOGENOM" id="CLU_006553_3_0_2"/>
<dbReference type="OrthoDB" id="371946at2157"/>
<dbReference type="Proteomes" id="UP000001979">
    <property type="component" value="Chromosome"/>
</dbReference>
<dbReference type="GO" id="GO:0043138">
    <property type="term" value="F:3'-5' DNA helicase activity"/>
    <property type="evidence" value="ECO:0007669"/>
    <property type="project" value="UniProtKB-UniRule"/>
</dbReference>
<dbReference type="GO" id="GO:0005524">
    <property type="term" value="F:ATP binding"/>
    <property type="evidence" value="ECO:0007669"/>
    <property type="project" value="UniProtKB-UniRule"/>
</dbReference>
<dbReference type="GO" id="GO:0016887">
    <property type="term" value="F:ATP hydrolysis activity"/>
    <property type="evidence" value="ECO:0007669"/>
    <property type="project" value="RHEA"/>
</dbReference>
<dbReference type="GO" id="GO:0003677">
    <property type="term" value="F:DNA binding"/>
    <property type="evidence" value="ECO:0007669"/>
    <property type="project" value="UniProtKB-UniRule"/>
</dbReference>
<dbReference type="GO" id="GO:0006281">
    <property type="term" value="P:DNA repair"/>
    <property type="evidence" value="ECO:0007669"/>
    <property type="project" value="UniProtKB-UniRule"/>
</dbReference>
<dbReference type="CDD" id="cd18028">
    <property type="entry name" value="DEXHc_archSki2"/>
    <property type="match status" value="1"/>
</dbReference>
<dbReference type="CDD" id="cd18795">
    <property type="entry name" value="SF2_C_Ski2"/>
    <property type="match status" value="1"/>
</dbReference>
<dbReference type="Gene3D" id="1.10.3380.30">
    <property type="match status" value="1"/>
</dbReference>
<dbReference type="Gene3D" id="1.10.150.20">
    <property type="entry name" value="5' to 3' exonuclease, C-terminal subdomain"/>
    <property type="match status" value="1"/>
</dbReference>
<dbReference type="Gene3D" id="3.40.50.300">
    <property type="entry name" value="P-loop containing nucleotide triphosphate hydrolases"/>
    <property type="match status" value="2"/>
</dbReference>
<dbReference type="HAMAP" id="MF_00442">
    <property type="entry name" value="Helicase_Hel308"/>
    <property type="match status" value="1"/>
</dbReference>
<dbReference type="InterPro" id="IPR011545">
    <property type="entry name" value="DEAD/DEAH_box_helicase_dom"/>
</dbReference>
<dbReference type="InterPro" id="IPR048772">
    <property type="entry name" value="Hel308-like_dom4"/>
</dbReference>
<dbReference type="InterPro" id="IPR050474">
    <property type="entry name" value="Hel308_SKI2-like"/>
</dbReference>
<dbReference type="InterPro" id="IPR014001">
    <property type="entry name" value="Helicase_ATP-bd"/>
</dbReference>
<dbReference type="InterPro" id="IPR001650">
    <property type="entry name" value="Helicase_C-like"/>
</dbReference>
<dbReference type="InterPro" id="IPR022965">
    <property type="entry name" value="Helicase_Hel308"/>
</dbReference>
<dbReference type="InterPro" id="IPR046931">
    <property type="entry name" value="HTH_61"/>
</dbReference>
<dbReference type="InterPro" id="IPR027417">
    <property type="entry name" value="P-loop_NTPase"/>
</dbReference>
<dbReference type="InterPro" id="IPR036390">
    <property type="entry name" value="WH_DNA-bd_sf"/>
</dbReference>
<dbReference type="NCBIfam" id="NF002654">
    <property type="entry name" value="PRK02362.1"/>
    <property type="match status" value="1"/>
</dbReference>
<dbReference type="PANTHER" id="PTHR47961:SF10">
    <property type="entry name" value="ATP-DEPENDENT DNA HELICASE HEL308"/>
    <property type="match status" value="1"/>
</dbReference>
<dbReference type="PANTHER" id="PTHR47961">
    <property type="entry name" value="DNA POLYMERASE THETA, PUTATIVE (AFU_ORTHOLOGUE AFUA_1G05260)-RELATED"/>
    <property type="match status" value="1"/>
</dbReference>
<dbReference type="Pfam" id="PF00270">
    <property type="entry name" value="DEAD"/>
    <property type="match status" value="1"/>
</dbReference>
<dbReference type="Pfam" id="PF00271">
    <property type="entry name" value="Helicase_C"/>
    <property type="match status" value="1"/>
</dbReference>
<dbReference type="Pfam" id="PF21280">
    <property type="entry name" value="Helicase_dom4_arc"/>
    <property type="match status" value="1"/>
</dbReference>
<dbReference type="Pfam" id="PF14520">
    <property type="entry name" value="HHH_5"/>
    <property type="match status" value="1"/>
</dbReference>
<dbReference type="Pfam" id="PF20470">
    <property type="entry name" value="HTH_61"/>
    <property type="match status" value="1"/>
</dbReference>
<dbReference type="SMART" id="SM00487">
    <property type="entry name" value="DEXDc"/>
    <property type="match status" value="1"/>
</dbReference>
<dbReference type="SMART" id="SM00490">
    <property type="entry name" value="HELICc"/>
    <property type="match status" value="1"/>
</dbReference>
<dbReference type="SUPFAM" id="SSF52540">
    <property type="entry name" value="P-loop containing nucleoside triphosphate hydrolases"/>
    <property type="match status" value="2"/>
</dbReference>
<dbReference type="SUPFAM" id="SSF158702">
    <property type="entry name" value="Sec63 N-terminal domain-like"/>
    <property type="match status" value="1"/>
</dbReference>
<dbReference type="SUPFAM" id="SSF46785">
    <property type="entry name" value="Winged helix' DNA-binding domain"/>
    <property type="match status" value="1"/>
</dbReference>
<dbReference type="PROSITE" id="PS51192">
    <property type="entry name" value="HELICASE_ATP_BIND_1"/>
    <property type="match status" value="1"/>
</dbReference>
<dbReference type="PROSITE" id="PS51194">
    <property type="entry name" value="HELICASE_CTER"/>
    <property type="match status" value="1"/>
</dbReference>
<protein>
    <recommendedName>
        <fullName evidence="1">ATP-dependent DNA helicase Hel308</fullName>
        <ecNumber evidence="1">5.6.2.4</ecNumber>
    </recommendedName>
    <alternativeName>
        <fullName evidence="1">DNA 3'-5' helicase Hel308</fullName>
    </alternativeName>
</protein>
<comment type="function">
    <text evidence="1">DNA-dependent ATPase and 3'-5' DNA helicase that may be involved in repair of stalled replication forks.</text>
</comment>
<comment type="catalytic activity">
    <reaction evidence="1">
        <text>Couples ATP hydrolysis with the unwinding of duplex DNA by translocating in the 3'-5' direction.</text>
        <dbReference type="EC" id="5.6.2.4"/>
    </reaction>
</comment>
<comment type="catalytic activity">
    <reaction evidence="1">
        <text>ATP + H2O = ADP + phosphate + H(+)</text>
        <dbReference type="Rhea" id="RHEA:13065"/>
        <dbReference type="ChEBI" id="CHEBI:15377"/>
        <dbReference type="ChEBI" id="CHEBI:15378"/>
        <dbReference type="ChEBI" id="CHEBI:30616"/>
        <dbReference type="ChEBI" id="CHEBI:43474"/>
        <dbReference type="ChEBI" id="CHEBI:456216"/>
        <dbReference type="EC" id="5.6.2.4"/>
    </reaction>
</comment>
<comment type="subunit">
    <text evidence="1">Monomer.</text>
</comment>
<comment type="similarity">
    <text evidence="1">Belongs to the helicase family. Hel308 subfamily.</text>
</comment>
<accession>Q12WZ6</accession>
<organism>
    <name type="scientific">Methanococcoides burtonii (strain DSM 6242 / NBRC 107633 / OCM 468 / ACE-M)</name>
    <dbReference type="NCBI Taxonomy" id="259564"/>
    <lineage>
        <taxon>Archaea</taxon>
        <taxon>Methanobacteriati</taxon>
        <taxon>Methanobacteriota</taxon>
        <taxon>Stenosarchaea group</taxon>
        <taxon>Methanomicrobia</taxon>
        <taxon>Methanosarcinales</taxon>
        <taxon>Methanosarcinaceae</taxon>
        <taxon>Methanococcoides</taxon>
    </lineage>
</organism>
<proteinExistence type="inferred from homology"/>